<protein>
    <recommendedName>
        <fullName evidence="14 15">Non-specific lipid transfer protein GPI-anchored 2</fullName>
        <shortName evidence="14 15">AtLTPG-2</shortName>
        <shortName evidence="14 15">Protein LTP-GPI-ANCHORED 2</shortName>
    </recommendedName>
    <alternativeName>
        <fullName evidence="13">Xylogen-like protein 10</fullName>
        <shortName evidence="13">AtXYLP10</shortName>
        <shortName evidence="13">AtXYP5</shortName>
    </alternativeName>
</protein>
<sequence>MSNVVVIAVVLIVASLTGHVSAQMDMSPSSGPSGAPDCMANLMNMTGCLSYVTVGEGGGAAKPDKTCCPALAGLVESSPQCLCYLLSGDMAAQLGIKIDKAKALKLPGVCGVITPDPSLCSLFGIPVGAPVAMGDEGASPAYAPGSMSGAESPGGFGSGPSASRGSDAPSSAPYSLFLNLIIFPLAFAFYIFC</sequence>
<evidence type="ECO:0000250" key="1"/>
<evidence type="ECO:0000250" key="2">
    <source>
        <dbReference type="UniProtKB" id="A0A0B4JDK1"/>
    </source>
</evidence>
<evidence type="ECO:0000255" key="3"/>
<evidence type="ECO:0000255" key="4">
    <source>
        <dbReference type="PROSITE-ProRule" id="PRU00498"/>
    </source>
</evidence>
<evidence type="ECO:0000256" key="5">
    <source>
        <dbReference type="SAM" id="MobiDB-lite"/>
    </source>
</evidence>
<evidence type="ECO:0000269" key="6">
    <source>
    </source>
</evidence>
<evidence type="ECO:0000269" key="7">
    <source>
    </source>
</evidence>
<evidence type="ECO:0000269" key="8">
    <source>
    </source>
</evidence>
<evidence type="ECO:0000269" key="9">
    <source>
    </source>
</evidence>
<evidence type="ECO:0000269" key="10">
    <source>
    </source>
</evidence>
<evidence type="ECO:0000269" key="11">
    <source>
    </source>
</evidence>
<evidence type="ECO:0000303" key="12">
    <source>
    </source>
</evidence>
<evidence type="ECO:0000303" key="13">
    <source>
    </source>
</evidence>
<evidence type="ECO:0000303" key="14">
    <source>
    </source>
</evidence>
<evidence type="ECO:0000303" key="15">
    <source>
    </source>
</evidence>
<evidence type="ECO:0000305" key="16"/>
<evidence type="ECO:0000312" key="17">
    <source>
        <dbReference type="Araport" id="AT3G43720"/>
    </source>
</evidence>
<evidence type="ECO:0000312" key="18">
    <source>
        <dbReference type="EMBL" id="CAB83144.1"/>
    </source>
</evidence>
<dbReference type="EMBL" id="AB246324">
    <property type="protein sequence ID" value="BAE73261.1"/>
    <property type="molecule type" value="mRNA"/>
</dbReference>
<dbReference type="EMBL" id="AL162691">
    <property type="protein sequence ID" value="CAB83144.1"/>
    <property type="molecule type" value="Genomic_DNA"/>
</dbReference>
<dbReference type="EMBL" id="CP002686">
    <property type="protein sequence ID" value="AEE77821.1"/>
    <property type="molecule type" value="Genomic_DNA"/>
</dbReference>
<dbReference type="EMBL" id="CP002686">
    <property type="protein sequence ID" value="AEE77822.1"/>
    <property type="molecule type" value="Genomic_DNA"/>
</dbReference>
<dbReference type="EMBL" id="AY045908">
    <property type="protein sequence ID" value="AAK76582.1"/>
    <property type="molecule type" value="mRNA"/>
</dbReference>
<dbReference type="EMBL" id="AY079420">
    <property type="protein sequence ID" value="AAL85151.1"/>
    <property type="molecule type" value="mRNA"/>
</dbReference>
<dbReference type="EMBL" id="AK318819">
    <property type="protein sequence ID" value="BAH56934.1"/>
    <property type="molecule type" value="mRNA"/>
</dbReference>
<dbReference type="EMBL" id="AY088620">
    <property type="protein sequence ID" value="AAM66942.1"/>
    <property type="molecule type" value="mRNA"/>
</dbReference>
<dbReference type="PIR" id="T47408">
    <property type="entry name" value="T47408"/>
</dbReference>
<dbReference type="RefSeq" id="NP_001030803.1">
    <molecule id="Q9LZH5-2"/>
    <property type="nucleotide sequence ID" value="NM_001035726.2"/>
</dbReference>
<dbReference type="RefSeq" id="NP_189958.1">
    <molecule id="Q9LZH5-1"/>
    <property type="nucleotide sequence ID" value="NM_114240.4"/>
</dbReference>
<dbReference type="SMR" id="Q9LZH5"/>
<dbReference type="FunCoup" id="Q9LZH5">
    <property type="interactions" value="99"/>
</dbReference>
<dbReference type="STRING" id="3702.Q9LZH5"/>
<dbReference type="GlyCosmos" id="Q9LZH5">
    <property type="glycosylation" value="1 site, No reported glycans"/>
</dbReference>
<dbReference type="GlyGen" id="Q9LZH5">
    <property type="glycosylation" value="1 site"/>
</dbReference>
<dbReference type="PaxDb" id="3702-AT3G43720.1"/>
<dbReference type="ProteomicsDB" id="238640">
    <molecule id="Q9LZH5-1"/>
</dbReference>
<dbReference type="EnsemblPlants" id="AT3G43720.1">
    <molecule id="Q9LZH5-1"/>
    <property type="protein sequence ID" value="AT3G43720.1"/>
    <property type="gene ID" value="AT3G43720"/>
</dbReference>
<dbReference type="EnsemblPlants" id="AT3G43720.2">
    <molecule id="Q9LZH5-2"/>
    <property type="protein sequence ID" value="AT3G43720.2"/>
    <property type="gene ID" value="AT3G43720"/>
</dbReference>
<dbReference type="GeneID" id="823481"/>
<dbReference type="Gramene" id="AT3G43720.1">
    <molecule id="Q9LZH5-1"/>
    <property type="protein sequence ID" value="AT3G43720.1"/>
    <property type="gene ID" value="AT3G43720"/>
</dbReference>
<dbReference type="Gramene" id="AT3G43720.2">
    <molecule id="Q9LZH5-2"/>
    <property type="protein sequence ID" value="AT3G43720.2"/>
    <property type="gene ID" value="AT3G43720"/>
</dbReference>
<dbReference type="KEGG" id="ath:AT3G43720"/>
<dbReference type="Araport" id="AT3G43720"/>
<dbReference type="TAIR" id="AT3G43720">
    <property type="gene designation" value="LTPG2"/>
</dbReference>
<dbReference type="eggNOG" id="ENOG502S59X">
    <property type="taxonomic scope" value="Eukaryota"/>
</dbReference>
<dbReference type="InParanoid" id="Q9LZH5"/>
<dbReference type="OMA" id="PNICTVE"/>
<dbReference type="PhylomeDB" id="Q9LZH5"/>
<dbReference type="PRO" id="PR:Q9LZH5"/>
<dbReference type="Proteomes" id="UP000006548">
    <property type="component" value="Chromosome 3"/>
</dbReference>
<dbReference type="ExpressionAtlas" id="Q9LZH5">
    <property type="expression patterns" value="baseline and differential"/>
</dbReference>
<dbReference type="GO" id="GO:0005886">
    <property type="term" value="C:plasma membrane"/>
    <property type="evidence" value="ECO:0000314"/>
    <property type="project" value="UniProtKB"/>
</dbReference>
<dbReference type="GO" id="GO:0098552">
    <property type="term" value="C:side of membrane"/>
    <property type="evidence" value="ECO:0007669"/>
    <property type="project" value="UniProtKB-KW"/>
</dbReference>
<dbReference type="GO" id="GO:0008289">
    <property type="term" value="F:lipid binding"/>
    <property type="evidence" value="ECO:0000250"/>
    <property type="project" value="UniProtKB"/>
</dbReference>
<dbReference type="GO" id="GO:0042335">
    <property type="term" value="P:cuticle development"/>
    <property type="evidence" value="ECO:0000315"/>
    <property type="project" value="UniProtKB"/>
</dbReference>
<dbReference type="GO" id="GO:0050832">
    <property type="term" value="P:defense response to fungus"/>
    <property type="evidence" value="ECO:0000315"/>
    <property type="project" value="UniProtKB"/>
</dbReference>
<dbReference type="GO" id="GO:0006869">
    <property type="term" value="P:lipid transport"/>
    <property type="evidence" value="ECO:0000250"/>
    <property type="project" value="UniProtKB"/>
</dbReference>
<dbReference type="CDD" id="cd00010">
    <property type="entry name" value="AAI_LTSS"/>
    <property type="match status" value="1"/>
</dbReference>
<dbReference type="FunFam" id="1.10.110.10:FF:000001">
    <property type="entry name" value="Bifunctional inhibitor/lipid-transfer protein/seed storage 2S albumin superfamily protein"/>
    <property type="match status" value="1"/>
</dbReference>
<dbReference type="Gene3D" id="1.10.110.10">
    <property type="entry name" value="Plant lipid-transfer and hydrophobic proteins"/>
    <property type="match status" value="1"/>
</dbReference>
<dbReference type="InterPro" id="IPR036312">
    <property type="entry name" value="Bifun_inhib/LTP/seed_sf"/>
</dbReference>
<dbReference type="InterPro" id="IPR016140">
    <property type="entry name" value="Bifunc_inhib/LTP/seed_store"/>
</dbReference>
<dbReference type="InterPro" id="IPR043325">
    <property type="entry name" value="LTSS"/>
</dbReference>
<dbReference type="PANTHER" id="PTHR33044">
    <property type="entry name" value="BIFUNCTIONAL INHIBITOR/LIPID-TRANSFER PROTEIN/SEED STORAGE 2S ALBUMIN SUPERFAMILY PROTEIN-RELATED"/>
    <property type="match status" value="1"/>
</dbReference>
<dbReference type="Pfam" id="PF14368">
    <property type="entry name" value="LTP_2"/>
    <property type="match status" value="1"/>
</dbReference>
<dbReference type="SMART" id="SM00499">
    <property type="entry name" value="AAI"/>
    <property type="match status" value="1"/>
</dbReference>
<dbReference type="SUPFAM" id="SSF47699">
    <property type="entry name" value="Bifunctional inhibitor/lipid-transfer protein/seed storage 2S albumin"/>
    <property type="match status" value="1"/>
</dbReference>
<accession>Q9LZH5</accession>
<accession>C0Z2K5</accession>
<accession>F4J0G3</accession>
<accession>Q8L962</accession>
<name>LTPG2_ARATH</name>
<gene>
    <name evidence="14 15" type="primary">LTPG2</name>
    <name evidence="13" type="synonym">XYLP10</name>
    <name evidence="13" type="synonym">XYP5</name>
    <name evidence="17" type="ordered locus">At3g43720</name>
    <name evidence="18" type="ORF">T28A8.10</name>
</gene>
<proteinExistence type="evidence at transcript level"/>
<feature type="signal peptide" evidence="3">
    <location>
        <begin position="1"/>
        <end position="22"/>
    </location>
</feature>
<feature type="chain" id="PRO_0000425708" description="Non-specific lipid transfer protein GPI-anchored 2">
    <location>
        <begin position="23"/>
        <end position="165"/>
    </location>
</feature>
<feature type="propeptide" id="PRO_0000425709" description="Removed in mature form" evidence="3">
    <location>
        <begin position="166"/>
        <end position="193"/>
    </location>
</feature>
<feature type="region of interest" description="Disordered" evidence="5">
    <location>
        <begin position="143"/>
        <end position="164"/>
    </location>
</feature>
<feature type="lipid moiety-binding region" description="GPI-anchor amidated glycine" evidence="3">
    <location>
        <position position="165"/>
    </location>
</feature>
<feature type="glycosylation site" description="N-linked (GlcNAc...) asparagine" evidence="4">
    <location>
        <position position="44"/>
    </location>
</feature>
<feature type="disulfide bond" evidence="2">
    <location>
        <begin position="38"/>
        <end position="83"/>
    </location>
</feature>
<feature type="disulfide bond" evidence="2">
    <location>
        <begin position="48"/>
        <end position="67"/>
    </location>
</feature>
<feature type="disulfide bond" evidence="2">
    <location>
        <begin position="68"/>
        <end position="110"/>
    </location>
</feature>
<feature type="disulfide bond" evidence="2">
    <location>
        <begin position="81"/>
        <end position="120"/>
    </location>
</feature>
<feature type="splice variant" id="VSP_053832" description="In isoform 3." evidence="12">
    <location>
        <begin position="145"/>
        <end position="150"/>
    </location>
</feature>
<feature type="splice variant" id="VSP_053833" description="In isoform 2." evidence="16">
    <location>
        <begin position="149"/>
        <end position="150"/>
    </location>
</feature>
<feature type="sequence conflict" description="In Ref. 6; AAM66942." evidence="16" ref="6">
    <original>L</original>
    <variation>R</variation>
    <location>
        <position position="176"/>
    </location>
</feature>
<comment type="function">
    <text evidence="8 10 11">Lipid transfer protein that, together with LTPG1, binds to lipids and functions as a component of the cuticular lipid export machinery that performs extensive export of intracellular lipids (e.g. C29 alkane) from epidermal cells to the surface to build the cuticular wax layer and silique walls (PubMed:22891199). Contributes to pre-invasive defense against some non-host powdery mildew pathogens by preventing the penetration of the epidermal cell wall by the fungal agents (e.g. Blumeria graminis f. sp. hordei (Bgh)) (PubMed:30102837). Involved in seed and ovule maturation and development, probably by regulating the fatty acids homeostasis during suberin and sporopollenin biosynthesis or deposition (PubMed:24460633).</text>
</comment>
<comment type="subcellular location">
    <subcellularLocation>
        <location evidence="8">Cell membrane</location>
        <topology evidence="3">Lipid-anchor</topology>
        <topology evidence="3">GPI-anchor</topology>
    </subcellularLocation>
    <text evidence="8">Targeted to the plasma membrane via the vesicular trafficking system.</text>
</comment>
<comment type="alternative products">
    <event type="alternative splicing"/>
    <isoform>
        <id>Q9LZH5-1</id>
        <name>1</name>
        <sequence type="displayed"/>
    </isoform>
    <isoform>
        <id>Q9LZH5-2</id>
        <name>2</name>
        <sequence type="described" ref="VSP_053833"/>
    </isoform>
    <isoform>
        <id>Q9LZH5-3</id>
        <name>3</name>
        <sequence type="described" ref="VSP_053832"/>
    </isoform>
</comment>
<comment type="tissue specificity">
    <text evidence="6 7 8 9">Up-regulated in the epidermis of top stems. Expressed in roots, cotyledons, seedlings, leaves, stems, buds, flower and silique walls (PubMed:23893219). Preferentially expressed in the shoot apical meristem and the root meristem (PubMed:21558309). Also detected in expanding leaves and petals, developing flowers, and elongating pistils, stamens and siliques (PubMed:21558309).</text>
</comment>
<comment type="developmental stage">
    <text evidence="7 8 9">Accumulates in seeds after imbibition (PubMed:23893219). Mainly present in elongating or expanding tissues (PubMed:21558309). Strongly expressed in the aerial portions and root tips of seedlings. Present in stem and leaf epidermis, including the trichomes, leaf mesophyll cells, and stem cortex and xylem. In flowers, observed in the upper portion of the styles, anther filament, and veins of the sepals and petals, silique walls and developing seeds (PubMed:23893219).</text>
</comment>
<comment type="PTM">
    <text evidence="1">O-glycosylated on hydroxyprolines; noncontiguous hydroxylproline residues are glycosylated with arabinogalactan.</text>
</comment>
<comment type="disruption phenotype">
    <text evidence="8 10 11">Reduced cuticular wax load on the stem surface and in silique walls, with altered cuticular lipid composition (especially C29 alkane) associated with diffuse cuticular layer structure (PubMed:22891199). Increased susceptibility to penetration of the epidermal cell wall by the non-host mildew fungal agent Blumeria graminis f. sp. hordei (Bgh) (PubMed:30102837). Some early aborted seeds and infertile ovules, and increased salt permeability in seeds (PubMed:24460633).</text>
</comment>
<comment type="similarity">
    <text evidence="16">Belongs to the plant LTP family.</text>
</comment>
<keyword id="KW-0025">Alternative splicing</keyword>
<keyword id="KW-1003">Cell membrane</keyword>
<keyword id="KW-1015">Disulfide bond</keyword>
<keyword id="KW-0325">Glycoprotein</keyword>
<keyword id="KW-0336">GPI-anchor</keyword>
<keyword id="KW-0446">Lipid-binding</keyword>
<keyword id="KW-0449">Lipoprotein</keyword>
<keyword id="KW-0472">Membrane</keyword>
<keyword id="KW-0611">Plant defense</keyword>
<keyword id="KW-1185">Reference proteome</keyword>
<keyword id="KW-0732">Signal</keyword>
<organism>
    <name type="scientific">Arabidopsis thaliana</name>
    <name type="common">Mouse-ear cress</name>
    <dbReference type="NCBI Taxonomy" id="3702"/>
    <lineage>
        <taxon>Eukaryota</taxon>
        <taxon>Viridiplantae</taxon>
        <taxon>Streptophyta</taxon>
        <taxon>Embryophyta</taxon>
        <taxon>Tracheophyta</taxon>
        <taxon>Spermatophyta</taxon>
        <taxon>Magnoliopsida</taxon>
        <taxon>eudicotyledons</taxon>
        <taxon>Gunneridae</taxon>
        <taxon>Pentapetalae</taxon>
        <taxon>rosids</taxon>
        <taxon>malvids</taxon>
        <taxon>Brassicales</taxon>
        <taxon>Brassicaceae</taxon>
        <taxon>Camelineae</taxon>
        <taxon>Arabidopsis</taxon>
    </lineage>
</organism>
<reference key="1">
    <citation type="journal article" date="2011" name="Plant Cell Physiol.">
        <title>Expression and genome-wide analysis of the xylogen-type gene family.</title>
        <authorList>
            <person name="Kobayashi Y."/>
            <person name="Motose H."/>
            <person name="Iwamoto K."/>
            <person name="Fukuda H."/>
        </authorList>
    </citation>
    <scope>NUCLEOTIDE SEQUENCE [MRNA] (ISOFORM 1)</scope>
    <scope>TISSUE SPECIFICITY</scope>
    <scope>DEVELOPMENTAL STAGE</scope>
    <scope>GENE FAMILY</scope>
    <scope>NOMENCLATURE</scope>
    <source>
        <strain>cv. Columbia</strain>
    </source>
</reference>
<reference key="2">
    <citation type="journal article" date="2000" name="Nature">
        <title>Sequence and analysis of chromosome 3 of the plant Arabidopsis thaliana.</title>
        <authorList>
            <person name="Salanoubat M."/>
            <person name="Lemcke K."/>
            <person name="Rieger M."/>
            <person name="Ansorge W."/>
            <person name="Unseld M."/>
            <person name="Fartmann B."/>
            <person name="Valle G."/>
            <person name="Bloecker H."/>
            <person name="Perez-Alonso M."/>
            <person name="Obermaier B."/>
            <person name="Delseny M."/>
            <person name="Boutry M."/>
            <person name="Grivell L.A."/>
            <person name="Mache R."/>
            <person name="Puigdomenech P."/>
            <person name="De Simone V."/>
            <person name="Choisne N."/>
            <person name="Artiguenave F."/>
            <person name="Robert C."/>
            <person name="Brottier P."/>
            <person name="Wincker P."/>
            <person name="Cattolico L."/>
            <person name="Weissenbach J."/>
            <person name="Saurin W."/>
            <person name="Quetier F."/>
            <person name="Schaefer M."/>
            <person name="Mueller-Auer S."/>
            <person name="Gabel C."/>
            <person name="Fuchs M."/>
            <person name="Benes V."/>
            <person name="Wurmbach E."/>
            <person name="Drzonek H."/>
            <person name="Erfle H."/>
            <person name="Jordan N."/>
            <person name="Bangert S."/>
            <person name="Wiedelmann R."/>
            <person name="Kranz H."/>
            <person name="Voss H."/>
            <person name="Holland R."/>
            <person name="Brandt P."/>
            <person name="Nyakatura G."/>
            <person name="Vezzi A."/>
            <person name="D'Angelo M."/>
            <person name="Pallavicini A."/>
            <person name="Toppo S."/>
            <person name="Simionati B."/>
            <person name="Conrad A."/>
            <person name="Hornischer K."/>
            <person name="Kauer G."/>
            <person name="Loehnert T.-H."/>
            <person name="Nordsiek G."/>
            <person name="Reichelt J."/>
            <person name="Scharfe M."/>
            <person name="Schoen O."/>
            <person name="Bargues M."/>
            <person name="Terol J."/>
            <person name="Climent J."/>
            <person name="Navarro P."/>
            <person name="Collado C."/>
            <person name="Perez-Perez A."/>
            <person name="Ottenwaelder B."/>
            <person name="Duchemin D."/>
            <person name="Cooke R."/>
            <person name="Laudie M."/>
            <person name="Berger-Llauro C."/>
            <person name="Purnelle B."/>
            <person name="Masuy D."/>
            <person name="de Haan M."/>
            <person name="Maarse A.C."/>
            <person name="Alcaraz J.-P."/>
            <person name="Cottet A."/>
            <person name="Casacuberta E."/>
            <person name="Monfort A."/>
            <person name="Argiriou A."/>
            <person name="Flores M."/>
            <person name="Liguori R."/>
            <person name="Vitale D."/>
            <person name="Mannhaupt G."/>
            <person name="Haase D."/>
            <person name="Schoof H."/>
            <person name="Rudd S."/>
            <person name="Zaccaria P."/>
            <person name="Mewes H.-W."/>
            <person name="Mayer K.F.X."/>
            <person name="Kaul S."/>
            <person name="Town C.D."/>
            <person name="Koo H.L."/>
            <person name="Tallon L.J."/>
            <person name="Jenkins J."/>
            <person name="Rooney T."/>
            <person name="Rizzo M."/>
            <person name="Walts A."/>
            <person name="Utterback T."/>
            <person name="Fujii C.Y."/>
            <person name="Shea T.P."/>
            <person name="Creasy T.H."/>
            <person name="Haas B."/>
            <person name="Maiti R."/>
            <person name="Wu D."/>
            <person name="Peterson J."/>
            <person name="Van Aken S."/>
            <person name="Pai G."/>
            <person name="Militscher J."/>
            <person name="Sellers P."/>
            <person name="Gill J.E."/>
            <person name="Feldblyum T.V."/>
            <person name="Preuss D."/>
            <person name="Lin X."/>
            <person name="Nierman W.C."/>
            <person name="Salzberg S.L."/>
            <person name="White O."/>
            <person name="Venter J.C."/>
            <person name="Fraser C.M."/>
            <person name="Kaneko T."/>
            <person name="Nakamura Y."/>
            <person name="Sato S."/>
            <person name="Kato T."/>
            <person name="Asamizu E."/>
            <person name="Sasamoto S."/>
            <person name="Kimura T."/>
            <person name="Idesawa K."/>
            <person name="Kawashima K."/>
            <person name="Kishida Y."/>
            <person name="Kiyokawa C."/>
            <person name="Kohara M."/>
            <person name="Matsumoto M."/>
            <person name="Matsuno A."/>
            <person name="Muraki A."/>
            <person name="Nakayama S."/>
            <person name="Nakazaki N."/>
            <person name="Shinpo S."/>
            <person name="Takeuchi C."/>
            <person name="Wada T."/>
            <person name="Watanabe A."/>
            <person name="Yamada M."/>
            <person name="Yasuda M."/>
            <person name="Tabata S."/>
        </authorList>
    </citation>
    <scope>NUCLEOTIDE SEQUENCE [LARGE SCALE GENOMIC DNA]</scope>
    <source>
        <strain>cv. Columbia</strain>
    </source>
</reference>
<reference key="3">
    <citation type="journal article" date="2017" name="Plant J.">
        <title>Araport11: a complete reannotation of the Arabidopsis thaliana reference genome.</title>
        <authorList>
            <person name="Cheng C.Y."/>
            <person name="Krishnakumar V."/>
            <person name="Chan A.P."/>
            <person name="Thibaud-Nissen F."/>
            <person name="Schobel S."/>
            <person name="Town C.D."/>
        </authorList>
    </citation>
    <scope>GENOME REANNOTATION</scope>
    <source>
        <strain>cv. Columbia</strain>
    </source>
</reference>
<reference key="4">
    <citation type="journal article" date="2003" name="Science">
        <title>Empirical analysis of transcriptional activity in the Arabidopsis genome.</title>
        <authorList>
            <person name="Yamada K."/>
            <person name="Lim J."/>
            <person name="Dale J.M."/>
            <person name="Chen H."/>
            <person name="Shinn P."/>
            <person name="Palm C.J."/>
            <person name="Southwick A.M."/>
            <person name="Wu H.C."/>
            <person name="Kim C.J."/>
            <person name="Nguyen M."/>
            <person name="Pham P.K."/>
            <person name="Cheuk R.F."/>
            <person name="Karlin-Newmann G."/>
            <person name="Liu S.X."/>
            <person name="Lam B."/>
            <person name="Sakano H."/>
            <person name="Wu T."/>
            <person name="Yu G."/>
            <person name="Miranda M."/>
            <person name="Quach H.L."/>
            <person name="Tripp M."/>
            <person name="Chang C.H."/>
            <person name="Lee J.M."/>
            <person name="Toriumi M.J."/>
            <person name="Chan M.M."/>
            <person name="Tang C.C."/>
            <person name="Onodera C.S."/>
            <person name="Deng J.M."/>
            <person name="Akiyama K."/>
            <person name="Ansari Y."/>
            <person name="Arakawa T."/>
            <person name="Banh J."/>
            <person name="Banno F."/>
            <person name="Bowser L."/>
            <person name="Brooks S.Y."/>
            <person name="Carninci P."/>
            <person name="Chao Q."/>
            <person name="Choy N."/>
            <person name="Enju A."/>
            <person name="Goldsmith A.D."/>
            <person name="Gurjal M."/>
            <person name="Hansen N.F."/>
            <person name="Hayashizaki Y."/>
            <person name="Johnson-Hopson C."/>
            <person name="Hsuan V.W."/>
            <person name="Iida K."/>
            <person name="Karnes M."/>
            <person name="Khan S."/>
            <person name="Koesema E."/>
            <person name="Ishida J."/>
            <person name="Jiang P.X."/>
            <person name="Jones T."/>
            <person name="Kawai J."/>
            <person name="Kamiya A."/>
            <person name="Meyers C."/>
            <person name="Nakajima M."/>
            <person name="Narusaka M."/>
            <person name="Seki M."/>
            <person name="Sakurai T."/>
            <person name="Satou M."/>
            <person name="Tamse R."/>
            <person name="Vaysberg M."/>
            <person name="Wallender E.K."/>
            <person name="Wong C."/>
            <person name="Yamamura Y."/>
            <person name="Yuan S."/>
            <person name="Shinozaki K."/>
            <person name="Davis R.W."/>
            <person name="Theologis A."/>
            <person name="Ecker J.R."/>
        </authorList>
    </citation>
    <scope>NUCLEOTIDE SEQUENCE [LARGE SCALE MRNA] (ISOFORM 1)</scope>
    <source>
        <strain>cv. Columbia</strain>
    </source>
</reference>
<reference key="5">
    <citation type="journal article" date="2009" name="DNA Res.">
        <title>Analysis of multiple occurrences of alternative splicing events in Arabidopsis thaliana using novel sequenced full-length cDNAs.</title>
        <authorList>
            <person name="Iida K."/>
            <person name="Fukami-Kobayashi K."/>
            <person name="Toyoda A."/>
            <person name="Sakaki Y."/>
            <person name="Kobayashi M."/>
            <person name="Seki M."/>
            <person name="Shinozaki K."/>
        </authorList>
    </citation>
    <scope>NUCLEOTIDE SEQUENCE [LARGE SCALE MRNA] (ISOFORM 3)</scope>
    <source>
        <strain>cv. Columbia</strain>
        <tissue>Flower</tissue>
        <tissue>Silique</tissue>
    </source>
</reference>
<reference key="6">
    <citation type="submission" date="2002-03" db="EMBL/GenBank/DDBJ databases">
        <title>Full-length cDNA from Arabidopsis thaliana.</title>
        <authorList>
            <person name="Brover V.V."/>
            <person name="Troukhan M.E."/>
            <person name="Alexandrov N.A."/>
            <person name="Lu Y.-P."/>
            <person name="Flavell R.B."/>
            <person name="Feldmann K.A."/>
        </authorList>
    </citation>
    <scope>NUCLEOTIDE SEQUENCE [LARGE SCALE MRNA] (ISOFORM 1)</scope>
</reference>
<reference key="7">
    <citation type="journal article" date="2005" name="Plant Physiol.">
        <title>Cuticular lipid composition, surface structure, and gene expression in Arabidopsis stem epidermis.</title>
        <authorList>
            <person name="Suh M.C."/>
            <person name="Samuels A.L."/>
            <person name="Jetter R."/>
            <person name="Kunst L."/>
            <person name="Pollard M."/>
            <person name="Ohlrogge J."/>
            <person name="Beisson F."/>
        </authorList>
    </citation>
    <scope>TISSUE SPECIFICITY</scope>
</reference>
<reference key="8">
    <citation type="journal article" date="2012" name="Plant Cell Physiol.">
        <title>Characterization of glycosylphosphatidylinositol-anchored lipid transfer protein 2 (LTPG2) and overlapping function between LTPG/LTPG1 and LTPG2 in cuticular wax export or accumulation in Arabidopsis thaliana.</title>
        <authorList>
            <person name="Kim H."/>
            <person name="Lee S.B."/>
            <person name="Kim H.J."/>
            <person name="Min M.K."/>
            <person name="Hwang I."/>
            <person name="Suh M.C."/>
        </authorList>
    </citation>
    <scope>FUNCTION</scope>
    <scope>DISRUPTION PHENOTYPE</scope>
    <scope>SUBCELLULAR LOCATION</scope>
    <scope>TISSUE SPECIFICITY</scope>
    <scope>DEVELOPMENTAL STAGE</scope>
    <source>
        <strain>cv. Columbia</strain>
    </source>
</reference>
<reference key="9">
    <citation type="journal article" date="2013" name="Arabidopsis Book">
        <title>Acyl-lipid metabolism.</title>
        <authorList>
            <person name="Li-Beisson Y."/>
            <person name="Shorrosh B."/>
            <person name="Beisson F."/>
            <person name="Andersson M.X."/>
            <person name="Arondel V."/>
            <person name="Bates P.D."/>
            <person name="Baud S."/>
            <person name="Bird D."/>
            <person name="Debono A."/>
            <person name="Durrett T.P."/>
            <person name="Franke R.B."/>
            <person name="Graham I.A."/>
            <person name="Katayama K."/>
            <person name="Kelly A.A."/>
            <person name="Larson T."/>
            <person name="Markham J.E."/>
            <person name="Miquel M."/>
            <person name="Molina I."/>
            <person name="Nishida I."/>
            <person name="Rowland O."/>
            <person name="Samuels L."/>
            <person name="Schmid K.M."/>
            <person name="Wada H."/>
            <person name="Welti R."/>
            <person name="Xu C."/>
            <person name="Zallot R."/>
            <person name="Ohlrogge J."/>
        </authorList>
    </citation>
    <scope>REVIEW</scope>
</reference>
<reference key="10">
    <citation type="journal article" date="2013" name="Plant Mol. Biol.">
        <title>Coexpression patterns indicate that GPI-anchored non-specific lipid transfer proteins are involved in accumulation of cuticular wax, suberin and sporopollenin.</title>
        <authorList>
            <person name="Edstam M.M."/>
            <person name="Blomqvist K."/>
            <person name="Ekloef A."/>
            <person name="Wennergren U."/>
            <person name="Edqvist J."/>
        </authorList>
    </citation>
    <scope>TISSUE SPECIFICITY</scope>
    <scope>DEVELOPMENTAL STAGE</scope>
    <scope>GENE FAMILY</scope>
    <scope>NOMENCLATURE</scope>
    <source>
        <strain>cv. Columbia</strain>
    </source>
</reference>
<reference key="11">
    <citation type="journal article" date="2014" name="Physiol. Plantarum">
        <title>Involvement of GPI-anchored lipid transfer proteins in the development of seed coats and pollen in Arabidopsis thaliana.</title>
        <authorList>
            <person name="Edstam M.M."/>
            <person name="Edqvist J."/>
        </authorList>
    </citation>
    <scope>FUNCTION</scope>
    <scope>DISRUPTION PHENOTYPE</scope>
    <scope>GENE FAMILY</scope>
    <source>
        <strain>cv. Columbia</strain>
    </source>
</reference>
<reference key="12">
    <citation type="journal article" date="2019" name="Mol. Plant Pathol.">
        <title>Involvement of lipid transfer proteins in resistance against a non-host powdery mildew in Arabidopsis thaliana.</title>
        <authorList>
            <person name="Fahlberg P."/>
            <person name="Buhot N."/>
            <person name="Johansson O.N."/>
            <person name="Andersson M.X."/>
        </authorList>
    </citation>
    <scope>FUNCTION</scope>
    <scope>DISRUPTION PHENOTYPE</scope>
    <scope>GENE FAMILY</scope>
    <scope>NOMENCLATURE</scope>
    <source>
        <strain>cv. Columbia</strain>
    </source>
</reference>